<dbReference type="EMBL" id="U51347">
    <property type="protein sequence ID" value="AAB38567.1"/>
    <property type="molecule type" value="Genomic_DNA"/>
</dbReference>
<dbReference type="EMBL" id="U51366">
    <property type="protein sequence ID" value="AAB38584.1"/>
    <property type="molecule type" value="Genomic_DNA"/>
</dbReference>
<dbReference type="SMR" id="O13235"/>
<dbReference type="GO" id="GO:0005615">
    <property type="term" value="C:extracellular space"/>
    <property type="evidence" value="ECO:0007669"/>
    <property type="project" value="TreeGrafter"/>
</dbReference>
<dbReference type="GO" id="GO:0005886">
    <property type="term" value="C:plasma membrane"/>
    <property type="evidence" value="ECO:0007669"/>
    <property type="project" value="UniProtKB-SubCell"/>
</dbReference>
<dbReference type="GO" id="GO:0005509">
    <property type="term" value="F:calcium ion binding"/>
    <property type="evidence" value="ECO:0007669"/>
    <property type="project" value="TreeGrafter"/>
</dbReference>
<dbReference type="GO" id="GO:0005113">
    <property type="term" value="F:patched binding"/>
    <property type="evidence" value="ECO:0007669"/>
    <property type="project" value="TreeGrafter"/>
</dbReference>
<dbReference type="GO" id="GO:0008233">
    <property type="term" value="F:peptidase activity"/>
    <property type="evidence" value="ECO:0007669"/>
    <property type="project" value="UniProtKB-KW"/>
</dbReference>
<dbReference type="GO" id="GO:0048513">
    <property type="term" value="P:animal organ development"/>
    <property type="evidence" value="ECO:0007669"/>
    <property type="project" value="UniProtKB-ARBA"/>
</dbReference>
<dbReference type="GO" id="GO:0048468">
    <property type="term" value="P:cell development"/>
    <property type="evidence" value="ECO:0007669"/>
    <property type="project" value="UniProtKB-ARBA"/>
</dbReference>
<dbReference type="GO" id="GO:0001708">
    <property type="term" value="P:cell fate specification"/>
    <property type="evidence" value="ECO:0007669"/>
    <property type="project" value="TreeGrafter"/>
</dbReference>
<dbReference type="GO" id="GO:0007267">
    <property type="term" value="P:cell-cell signaling"/>
    <property type="evidence" value="ECO:0007669"/>
    <property type="project" value="InterPro"/>
</dbReference>
<dbReference type="GO" id="GO:0007417">
    <property type="term" value="P:central nervous system development"/>
    <property type="evidence" value="ECO:0007669"/>
    <property type="project" value="UniProtKB-ARBA"/>
</dbReference>
<dbReference type="GO" id="GO:0030182">
    <property type="term" value="P:neuron differentiation"/>
    <property type="evidence" value="ECO:0007669"/>
    <property type="project" value="UniProtKB-ARBA"/>
</dbReference>
<dbReference type="GO" id="GO:0006508">
    <property type="term" value="P:proteolysis"/>
    <property type="evidence" value="ECO:0007669"/>
    <property type="project" value="UniProtKB-KW"/>
</dbReference>
<dbReference type="GO" id="GO:0010468">
    <property type="term" value="P:regulation of gene expression"/>
    <property type="evidence" value="ECO:0007669"/>
    <property type="project" value="TreeGrafter"/>
</dbReference>
<dbReference type="GO" id="GO:0007224">
    <property type="term" value="P:smoothened signaling pathway"/>
    <property type="evidence" value="ECO:0007669"/>
    <property type="project" value="TreeGrafter"/>
</dbReference>
<dbReference type="GO" id="GO:0009888">
    <property type="term" value="P:tissue development"/>
    <property type="evidence" value="ECO:0007669"/>
    <property type="project" value="UniProtKB-ARBA"/>
</dbReference>
<dbReference type="Gene3D" id="3.30.1380.10">
    <property type="match status" value="1"/>
</dbReference>
<dbReference type="InterPro" id="IPR001657">
    <property type="entry name" value="Hedgehog"/>
</dbReference>
<dbReference type="InterPro" id="IPR009045">
    <property type="entry name" value="Hedgehog_sig/DD-Pept_Zn-bd_sf"/>
</dbReference>
<dbReference type="InterPro" id="IPR050387">
    <property type="entry name" value="Hedgehog_Signaling"/>
</dbReference>
<dbReference type="InterPro" id="IPR000320">
    <property type="entry name" value="Hedgehog_signalling_dom"/>
</dbReference>
<dbReference type="PANTHER" id="PTHR11889">
    <property type="entry name" value="HEDGEHOG"/>
    <property type="match status" value="1"/>
</dbReference>
<dbReference type="PANTHER" id="PTHR11889:SF36">
    <property type="entry name" value="SONIC HEDGEHOG PROTEIN"/>
    <property type="match status" value="1"/>
</dbReference>
<dbReference type="Pfam" id="PF01085">
    <property type="entry name" value="HH_signal"/>
    <property type="match status" value="1"/>
</dbReference>
<dbReference type="PRINTS" id="PR00632">
    <property type="entry name" value="SONICHHOG"/>
</dbReference>
<dbReference type="SUPFAM" id="SSF55166">
    <property type="entry name" value="Hedgehog/DD-peptidase"/>
    <property type="match status" value="1"/>
</dbReference>
<reference key="1">
    <citation type="journal article" date="1996" name="Proc. Natl. Acad. Sci. U.S.A.">
        <title>Evolutionary analyses of hedgehog and Hoxd-10 genes in fish species closely related to the zebrafish.</title>
        <authorList>
            <person name="Zardoya R."/>
            <person name="Abouheif E."/>
            <person name="Meyer A."/>
        </authorList>
    </citation>
    <scope>NUCLEOTIDE SEQUENCE [GENOMIC DNA]</scope>
    <source>
        <tissue>Muscle</tissue>
    </source>
</reference>
<feature type="chain" id="PRO_0000058723" description="Sonic hedgehog protein">
    <location>
        <begin position="1" status="less than"/>
        <end position="121" status="greater than"/>
    </location>
</feature>
<feature type="binding site" evidence="2">
    <location>
        <position position="60"/>
    </location>
    <ligand>
        <name>Ca(2+)</name>
        <dbReference type="ChEBI" id="CHEBI:29108"/>
        <label>1</label>
    </ligand>
</feature>
<feature type="binding site" evidence="2">
    <location>
        <position position="61"/>
    </location>
    <ligand>
        <name>Ca(2+)</name>
        <dbReference type="ChEBI" id="CHEBI:29108"/>
        <label>1</label>
    </ligand>
</feature>
<feature type="binding site" evidence="2">
    <location>
        <position position="61"/>
    </location>
    <ligand>
        <name>Ca(2+)</name>
        <dbReference type="ChEBI" id="CHEBI:29108"/>
        <label>2</label>
    </ligand>
</feature>
<feature type="binding site" evidence="2">
    <location>
        <position position="76"/>
    </location>
    <ligand>
        <name>Ca(2+)</name>
        <dbReference type="ChEBI" id="CHEBI:29108"/>
        <label>1</label>
    </ligand>
</feature>
<feature type="binding site" evidence="2">
    <location>
        <position position="77"/>
    </location>
    <ligand>
        <name>Ca(2+)</name>
        <dbReference type="ChEBI" id="CHEBI:29108"/>
        <label>1</label>
    </ligand>
</feature>
<feature type="binding site" evidence="2">
    <location>
        <position position="77"/>
    </location>
    <ligand>
        <name>Ca(2+)</name>
        <dbReference type="ChEBI" id="CHEBI:29108"/>
        <label>2</label>
    </ligand>
</feature>
<feature type="binding site" evidence="2">
    <location>
        <position position="80"/>
    </location>
    <ligand>
        <name>Ca(2+)</name>
        <dbReference type="ChEBI" id="CHEBI:29108"/>
        <label>2</label>
    </ligand>
</feature>
<feature type="binding site" evidence="2">
    <location>
        <position position="82"/>
    </location>
    <ligand>
        <name>Ca(2+)</name>
        <dbReference type="ChEBI" id="CHEBI:29108"/>
        <label>2</label>
    </ligand>
</feature>
<feature type="binding site" evidence="2">
    <location>
        <position position="91"/>
    </location>
    <ligand>
        <name>Zn(2+)</name>
        <dbReference type="ChEBI" id="CHEBI:29105"/>
    </ligand>
</feature>
<feature type="binding site" evidence="2">
    <location>
        <position position="98"/>
    </location>
    <ligand>
        <name>Zn(2+)</name>
        <dbReference type="ChEBI" id="CHEBI:29105"/>
    </ligand>
</feature>
<feature type="non-consecutive residues" evidence="3">
    <location>
        <begin position="63"/>
        <end position="64"/>
    </location>
</feature>
<feature type="non-terminal residue">
    <location>
        <position position="1"/>
    </location>
</feature>
<feature type="non-terminal residue">
    <location>
        <position position="121"/>
    </location>
</feature>
<organism>
    <name type="scientific">Danio aff. albolineatus</name>
    <dbReference type="NCBI Taxonomy" id="46783"/>
    <lineage>
        <taxon>Eukaryota</taxon>
        <taxon>Metazoa</taxon>
        <taxon>Chordata</taxon>
        <taxon>Craniata</taxon>
        <taxon>Vertebrata</taxon>
        <taxon>Euteleostomi</taxon>
        <taxon>Actinopterygii</taxon>
        <taxon>Neopterygii</taxon>
        <taxon>Teleostei</taxon>
        <taxon>Ostariophysi</taxon>
        <taxon>Cypriniformes</taxon>
        <taxon>Danionidae</taxon>
        <taxon>Danioninae</taxon>
        <taxon>Danio</taxon>
    </lineage>
</organism>
<gene>
    <name type="primary">shh</name>
</gene>
<comment type="function">
    <text evidence="1">Intercellular signal essential for a variety of patterning events during development. Signal produced by the notochord that induces somite patterning, dorso-ventral patterning of the brain and early patterning of the developing eyes. Displays floor plate-inducing activity. Binds to the patched (PTC) receptor, which functions in association with smoothened (SMO), to activate the transcription of target genes. In the absence of SHH, PTC represses the constitutive signaling activity of SMO (By similarity).</text>
</comment>
<comment type="subunit">
    <text evidence="1">N-product is active as a multimer.</text>
</comment>
<comment type="subcellular location">
    <subcellularLocation>
        <location evidence="1">Secreted</location>
    </subcellularLocation>
    <subcellularLocation>
        <location evidence="1">Cell membrane</location>
    </subcellularLocation>
    <text evidence="1">Sonic hedgehog protein C-product: Secreted, extracellular space. Sonic hedgehog protein N-product: Cell membrane; Lipid-anchor. The C-terminal peptide diffuses from the cell, while the N-product either remains associated with lipid rafts at the cell surface, or forms freely diffusible active multimers with its hydrophobic lipid-modified N- and C-termini buried inside.</text>
</comment>
<comment type="domain">
    <text evidence="1">The sonic hedgehog protein N-product binds calcium and zinc ions; this stabilizes the protein fold and is essential for protein-protein interactions mediated by this domain.</text>
</comment>
<comment type="PTM">
    <text>The C-terminal domain displays an autoproteolysis activity and a cholesterol transferase activity. Both activities result in the cleavage of the full-length protein and covalent attachment of a cholesterol moiety to the C-terminal of the newly generated N-terminal fragment (N-product). The N-product is the active species in both local and long-range signaling, whereas the C-product has no signaling activity.</text>
</comment>
<comment type="PTM">
    <text evidence="1">Cholesterylation is required for N-product targeting to lipid rafts and multimerization.</text>
</comment>
<comment type="PTM">
    <text evidence="1">N-palmitoylation is required for N-product multimerization and full activity.</text>
</comment>
<comment type="similarity">
    <text evidence="3">Belongs to the hedgehog family.</text>
</comment>
<keyword id="KW-0068">Autocatalytic cleavage</keyword>
<keyword id="KW-0106">Calcium</keyword>
<keyword id="KW-1003">Cell membrane</keyword>
<keyword id="KW-0217">Developmental protein</keyword>
<keyword id="KW-0378">Hydrolase</keyword>
<keyword id="KW-0449">Lipoprotein</keyword>
<keyword id="KW-0472">Membrane</keyword>
<keyword id="KW-0479">Metal-binding</keyword>
<keyword id="KW-0564">Palmitate</keyword>
<keyword id="KW-0645">Protease</keyword>
<keyword id="KW-0964">Secreted</keyword>
<keyword id="KW-0862">Zinc</keyword>
<accession>O13235</accession>
<accession>O13191</accession>
<accession>O13192</accession>
<accession>O13236</accession>
<protein>
    <recommendedName>
        <fullName>Sonic hedgehog protein</fullName>
        <shortName>SHH</shortName>
    </recommendedName>
</protein>
<name>SHH_DANAA</name>
<evidence type="ECO:0000250" key="1"/>
<evidence type="ECO:0000250" key="2">
    <source>
        <dbReference type="UniProtKB" id="Q15465"/>
    </source>
</evidence>
<evidence type="ECO:0000305" key="3"/>
<sequence length="121" mass="14012">YGRRRHPKKLTPLAYKQFIPNVAEKTLGASGRYEGKITRNSERFKELTPNYNPDIIFKDEENTVMNHWPGVKLRVTEGWDEDGHHFEESLHYEGRAVDITTSDRDKSKYGTLSRLAVEAGF</sequence>
<proteinExistence type="inferred from homology"/>